<reference key="1">
    <citation type="journal article" date="2011" name="J. Bacteriol.">
        <title>Genome of Ochrobactrum anthropi ATCC 49188 T, a versatile opportunistic pathogen and symbiont of several eukaryotic hosts.</title>
        <authorList>
            <person name="Chain P.S."/>
            <person name="Lang D.M."/>
            <person name="Comerci D.J."/>
            <person name="Malfatti S.A."/>
            <person name="Vergez L.M."/>
            <person name="Shin M."/>
            <person name="Ugalde R.A."/>
            <person name="Garcia E."/>
            <person name="Tolmasky M.E."/>
        </authorList>
    </citation>
    <scope>NUCLEOTIDE SEQUENCE [LARGE SCALE GENOMIC DNA]</scope>
    <source>
        <strain>ATCC 49188 / DSM 6882 / CCUG 24695 / JCM 21032 / LMG 3331 / NBRC 15819 / NCTC 12168 / Alc 37</strain>
    </source>
</reference>
<feature type="chain" id="PRO_1000022383" description="Pyridoxine 5'-phosphate synthase">
    <location>
        <begin position="1"/>
        <end position="245"/>
    </location>
</feature>
<feature type="active site" description="Proton acceptor" evidence="1">
    <location>
        <position position="44"/>
    </location>
</feature>
<feature type="active site" description="Proton acceptor" evidence="1">
    <location>
        <position position="76"/>
    </location>
</feature>
<feature type="active site" description="Proton donor" evidence="1">
    <location>
        <position position="198"/>
    </location>
</feature>
<feature type="binding site" evidence="1">
    <location>
        <position position="8"/>
    </location>
    <ligand>
        <name>3-amino-2-oxopropyl phosphate</name>
        <dbReference type="ChEBI" id="CHEBI:57279"/>
    </ligand>
</feature>
<feature type="binding site" evidence="1">
    <location>
        <position position="19"/>
    </location>
    <ligand>
        <name>3-amino-2-oxopropyl phosphate</name>
        <dbReference type="ChEBI" id="CHEBI:57279"/>
    </ligand>
</feature>
<feature type="binding site" evidence="1">
    <location>
        <position position="46"/>
    </location>
    <ligand>
        <name>1-deoxy-D-xylulose 5-phosphate</name>
        <dbReference type="ChEBI" id="CHEBI:57792"/>
    </ligand>
</feature>
<feature type="binding site" evidence="1">
    <location>
        <position position="51"/>
    </location>
    <ligand>
        <name>1-deoxy-D-xylulose 5-phosphate</name>
        <dbReference type="ChEBI" id="CHEBI:57792"/>
    </ligand>
</feature>
<feature type="binding site" evidence="1">
    <location>
        <position position="106"/>
    </location>
    <ligand>
        <name>1-deoxy-D-xylulose 5-phosphate</name>
        <dbReference type="ChEBI" id="CHEBI:57792"/>
    </ligand>
</feature>
<feature type="binding site" evidence="1">
    <location>
        <position position="199"/>
    </location>
    <ligand>
        <name>3-amino-2-oxopropyl phosphate</name>
        <dbReference type="ChEBI" id="CHEBI:57279"/>
    </ligand>
</feature>
<feature type="binding site" evidence="1">
    <location>
        <begin position="221"/>
        <end position="222"/>
    </location>
    <ligand>
        <name>3-amino-2-oxopropyl phosphate</name>
        <dbReference type="ChEBI" id="CHEBI:57279"/>
    </ligand>
</feature>
<feature type="site" description="Transition state stabilizer" evidence="1">
    <location>
        <position position="157"/>
    </location>
</feature>
<proteinExistence type="inferred from homology"/>
<organism>
    <name type="scientific">Brucella anthropi (strain ATCC 49188 / DSM 6882 / CCUG 24695 / JCM 21032 / LMG 3331 / NBRC 15819 / NCTC 12168 / Alc 37)</name>
    <name type="common">Ochrobactrum anthropi</name>
    <dbReference type="NCBI Taxonomy" id="439375"/>
    <lineage>
        <taxon>Bacteria</taxon>
        <taxon>Pseudomonadati</taxon>
        <taxon>Pseudomonadota</taxon>
        <taxon>Alphaproteobacteria</taxon>
        <taxon>Hyphomicrobiales</taxon>
        <taxon>Brucellaceae</taxon>
        <taxon>Brucella/Ochrobactrum group</taxon>
        <taxon>Brucella</taxon>
    </lineage>
</organism>
<comment type="function">
    <text evidence="1">Catalyzes the complicated ring closure reaction between the two acyclic compounds 1-deoxy-D-xylulose-5-phosphate (DXP) and 3-amino-2-oxopropyl phosphate (1-amino-acetone-3-phosphate or AAP) to form pyridoxine 5'-phosphate (PNP) and inorganic phosphate.</text>
</comment>
<comment type="catalytic activity">
    <reaction evidence="1">
        <text>3-amino-2-oxopropyl phosphate + 1-deoxy-D-xylulose 5-phosphate = pyridoxine 5'-phosphate + phosphate + 2 H2O + H(+)</text>
        <dbReference type="Rhea" id="RHEA:15265"/>
        <dbReference type="ChEBI" id="CHEBI:15377"/>
        <dbReference type="ChEBI" id="CHEBI:15378"/>
        <dbReference type="ChEBI" id="CHEBI:43474"/>
        <dbReference type="ChEBI" id="CHEBI:57279"/>
        <dbReference type="ChEBI" id="CHEBI:57792"/>
        <dbReference type="ChEBI" id="CHEBI:58589"/>
        <dbReference type="EC" id="2.6.99.2"/>
    </reaction>
</comment>
<comment type="pathway">
    <text evidence="1">Cofactor biosynthesis; pyridoxine 5'-phosphate biosynthesis; pyridoxine 5'-phosphate from D-erythrose 4-phosphate: step 5/5.</text>
</comment>
<comment type="subunit">
    <text evidence="1">Homooctamer; tetramer of dimers.</text>
</comment>
<comment type="subcellular location">
    <subcellularLocation>
        <location evidence="1">Cytoplasm</location>
    </subcellularLocation>
</comment>
<comment type="similarity">
    <text evidence="1">Belongs to the PNP synthase family.</text>
</comment>
<keyword id="KW-0963">Cytoplasm</keyword>
<keyword id="KW-0664">Pyridoxine biosynthesis</keyword>
<keyword id="KW-1185">Reference proteome</keyword>
<keyword id="KW-0808">Transferase</keyword>
<accession>A6WZX2</accession>
<gene>
    <name evidence="1" type="primary">pdxJ</name>
    <name type="ordered locus">Oant_1810</name>
</gene>
<sequence length="245" mass="26332">MPAKLSVNLNAVAMLRNRRDLPWPSVTGLGRAALAAGAAGLTVHPRPDQRHIRFSDLGDIRALIDDEFPQAEFNIEGFPSEAFLDLVEKHQPEQVTLVPDDPTQATSDHGWDFVSRSDFLAPIVARLKAGGMRVSLFADPDPLGYERAAAIGVDRVELYTGPYGATYDDPAAATRELDRLEKAANAATALGLDINAGHDLTVDNLPALVKRIPQLSEVSIGHGLTADALMYGMPVTVSRYIAALA</sequence>
<evidence type="ECO:0000255" key="1">
    <source>
        <dbReference type="HAMAP-Rule" id="MF_00279"/>
    </source>
</evidence>
<dbReference type="EC" id="2.6.99.2" evidence="1"/>
<dbReference type="EMBL" id="CP000758">
    <property type="protein sequence ID" value="ABS14526.1"/>
    <property type="molecule type" value="Genomic_DNA"/>
</dbReference>
<dbReference type="RefSeq" id="WP_012091801.1">
    <property type="nucleotide sequence ID" value="NC_009667.1"/>
</dbReference>
<dbReference type="SMR" id="A6WZX2"/>
<dbReference type="STRING" id="439375.Oant_1810"/>
<dbReference type="KEGG" id="oan:Oant_1810"/>
<dbReference type="PATRIC" id="fig|439375.7.peg.1911"/>
<dbReference type="eggNOG" id="COG0854">
    <property type="taxonomic scope" value="Bacteria"/>
</dbReference>
<dbReference type="HOGENOM" id="CLU_074563_1_0_5"/>
<dbReference type="PhylomeDB" id="A6WZX2"/>
<dbReference type="UniPathway" id="UPA00244">
    <property type="reaction ID" value="UER00313"/>
</dbReference>
<dbReference type="Proteomes" id="UP000002301">
    <property type="component" value="Chromosome 1"/>
</dbReference>
<dbReference type="GO" id="GO:0005829">
    <property type="term" value="C:cytosol"/>
    <property type="evidence" value="ECO:0007669"/>
    <property type="project" value="TreeGrafter"/>
</dbReference>
<dbReference type="GO" id="GO:0033856">
    <property type="term" value="F:pyridoxine 5'-phosphate synthase activity"/>
    <property type="evidence" value="ECO:0007669"/>
    <property type="project" value="UniProtKB-EC"/>
</dbReference>
<dbReference type="GO" id="GO:0008615">
    <property type="term" value="P:pyridoxine biosynthetic process"/>
    <property type="evidence" value="ECO:0007669"/>
    <property type="project" value="UniProtKB-UniRule"/>
</dbReference>
<dbReference type="CDD" id="cd00003">
    <property type="entry name" value="PNPsynthase"/>
    <property type="match status" value="1"/>
</dbReference>
<dbReference type="Gene3D" id="3.20.20.70">
    <property type="entry name" value="Aldolase class I"/>
    <property type="match status" value="1"/>
</dbReference>
<dbReference type="HAMAP" id="MF_00279">
    <property type="entry name" value="PdxJ"/>
    <property type="match status" value="1"/>
</dbReference>
<dbReference type="InterPro" id="IPR013785">
    <property type="entry name" value="Aldolase_TIM"/>
</dbReference>
<dbReference type="InterPro" id="IPR004569">
    <property type="entry name" value="PyrdxlP_synth_PdxJ"/>
</dbReference>
<dbReference type="InterPro" id="IPR036130">
    <property type="entry name" value="Pyridoxine-5'_phos_synth"/>
</dbReference>
<dbReference type="NCBIfam" id="TIGR00559">
    <property type="entry name" value="pdxJ"/>
    <property type="match status" value="1"/>
</dbReference>
<dbReference type="NCBIfam" id="NF003626">
    <property type="entry name" value="PRK05265.1-4"/>
    <property type="match status" value="1"/>
</dbReference>
<dbReference type="PANTHER" id="PTHR30456">
    <property type="entry name" value="PYRIDOXINE 5'-PHOSPHATE SYNTHASE"/>
    <property type="match status" value="1"/>
</dbReference>
<dbReference type="PANTHER" id="PTHR30456:SF0">
    <property type="entry name" value="PYRIDOXINE 5'-PHOSPHATE SYNTHASE"/>
    <property type="match status" value="1"/>
</dbReference>
<dbReference type="Pfam" id="PF03740">
    <property type="entry name" value="PdxJ"/>
    <property type="match status" value="1"/>
</dbReference>
<dbReference type="SUPFAM" id="SSF63892">
    <property type="entry name" value="Pyridoxine 5'-phosphate synthase"/>
    <property type="match status" value="1"/>
</dbReference>
<name>PDXJ_BRUA4</name>
<protein>
    <recommendedName>
        <fullName evidence="1">Pyridoxine 5'-phosphate synthase</fullName>
        <shortName evidence="1">PNP synthase</shortName>
        <ecNumber evidence="1">2.6.99.2</ecNumber>
    </recommendedName>
</protein>